<organism>
    <name type="scientific">Aspergillus oryzae (strain ATCC 42149 / RIB 40)</name>
    <name type="common">Yellow koji mold</name>
    <dbReference type="NCBI Taxonomy" id="510516"/>
    <lineage>
        <taxon>Eukaryota</taxon>
        <taxon>Fungi</taxon>
        <taxon>Dikarya</taxon>
        <taxon>Ascomycota</taxon>
        <taxon>Pezizomycotina</taxon>
        <taxon>Eurotiomycetes</taxon>
        <taxon>Eurotiomycetidae</taxon>
        <taxon>Eurotiales</taxon>
        <taxon>Aspergillaceae</taxon>
        <taxon>Aspergillus</taxon>
        <taxon>Aspergillus subgen. Circumdati</taxon>
    </lineage>
</organism>
<comment type="function">
    <text evidence="1">Involved in cytoplasm to vacuole transport (Cvt) and autophagic vesicle formation. Autophagy is essential for maintenance of amino acid levels and protein synthesis under nitrogen starvation. Required for selective autophagic degradation of the nucleus (nucleophagy). Also required for mitophagy, which eliminates defective or superfluous mitochondria in order to fulfill cellular energy requirements and prevent excess ROS production. Conjugation with atg12, through a ubiquitin-like conjugating system involving atg7 as an E1-like activating enzyme and atg10 as an E2-like conjugating enzyme, is essential for its function. The atg12-atg5 conjugate acts as an E3-like enzyme which is required for lipidation of atg8 and atg8 association to the vesicle membranes (By similarity).</text>
</comment>
<comment type="subunit">
    <text evidence="1">Conjugated with atg12.</text>
</comment>
<comment type="subcellular location">
    <subcellularLocation>
        <location evidence="1">Preautophagosomal structure membrane</location>
        <topology evidence="1">Peripheral membrane protein</topology>
    </subcellularLocation>
</comment>
<comment type="PTM">
    <text evidence="1">Conjugated to atg12; which is essential for autophagy.</text>
</comment>
<comment type="similarity">
    <text evidence="2">Belongs to the ATG5 family.</text>
</comment>
<keyword id="KW-0072">Autophagy</keyword>
<keyword id="KW-1017">Isopeptide bond</keyword>
<keyword id="KW-0472">Membrane</keyword>
<keyword id="KW-0653">Protein transport</keyword>
<keyword id="KW-1185">Reference proteome</keyword>
<keyword id="KW-0813">Transport</keyword>
<keyword id="KW-0832">Ubl conjugation</keyword>
<proteinExistence type="inferred from homology"/>
<protein>
    <recommendedName>
        <fullName>Autophagy protein 5</fullName>
    </recommendedName>
</protein>
<dbReference type="EMBL" id="BA000052">
    <property type="protein sequence ID" value="BAE61044.1"/>
    <property type="molecule type" value="Genomic_DNA"/>
</dbReference>
<dbReference type="SMR" id="Q2UBM1"/>
<dbReference type="STRING" id="510516.Q2UBM1"/>
<dbReference type="EnsemblFungi" id="BAE61044">
    <property type="protein sequence ID" value="BAE61044"/>
    <property type="gene ID" value="AO090012000943"/>
</dbReference>
<dbReference type="VEuPathDB" id="FungiDB:AO090012000943"/>
<dbReference type="HOGENOM" id="CLU_051894_2_0_1"/>
<dbReference type="OMA" id="SIQKAVW"/>
<dbReference type="Proteomes" id="UP000006564">
    <property type="component" value="Chromosome 4"/>
</dbReference>
<dbReference type="GO" id="GO:0034274">
    <property type="term" value="C:Atg12-Atg5-Atg16 complex"/>
    <property type="evidence" value="ECO:0007669"/>
    <property type="project" value="TreeGrafter"/>
</dbReference>
<dbReference type="GO" id="GO:0005776">
    <property type="term" value="C:autophagosome"/>
    <property type="evidence" value="ECO:0007669"/>
    <property type="project" value="TreeGrafter"/>
</dbReference>
<dbReference type="GO" id="GO:0044233">
    <property type="term" value="C:mitochondria-associated endoplasmic reticulum membrane contact site"/>
    <property type="evidence" value="ECO:0007669"/>
    <property type="project" value="TreeGrafter"/>
</dbReference>
<dbReference type="GO" id="GO:0061908">
    <property type="term" value="C:phagophore"/>
    <property type="evidence" value="ECO:0007669"/>
    <property type="project" value="TreeGrafter"/>
</dbReference>
<dbReference type="GO" id="GO:0034045">
    <property type="term" value="C:phagophore assembly site membrane"/>
    <property type="evidence" value="ECO:0007669"/>
    <property type="project" value="UniProtKB-SubCell"/>
</dbReference>
<dbReference type="GO" id="GO:0019776">
    <property type="term" value="F:Atg8-family ligase activity"/>
    <property type="evidence" value="ECO:0007669"/>
    <property type="project" value="TreeGrafter"/>
</dbReference>
<dbReference type="GO" id="GO:0000422">
    <property type="term" value="P:autophagy of mitochondrion"/>
    <property type="evidence" value="ECO:0007669"/>
    <property type="project" value="TreeGrafter"/>
</dbReference>
<dbReference type="GO" id="GO:0006995">
    <property type="term" value="P:cellular response to nitrogen starvation"/>
    <property type="evidence" value="ECO:0007669"/>
    <property type="project" value="TreeGrafter"/>
</dbReference>
<dbReference type="GO" id="GO:0034727">
    <property type="term" value="P:piecemeal microautophagy of the nucleus"/>
    <property type="evidence" value="ECO:0007669"/>
    <property type="project" value="TreeGrafter"/>
</dbReference>
<dbReference type="GO" id="GO:0015031">
    <property type="term" value="P:protein transport"/>
    <property type="evidence" value="ECO:0007669"/>
    <property type="project" value="UniProtKB-KW"/>
</dbReference>
<dbReference type="FunFam" id="1.10.246.190:FF:000004">
    <property type="entry name" value="Autophagy protein 5"/>
    <property type="match status" value="1"/>
</dbReference>
<dbReference type="FunFam" id="3.10.20.620:FF:000004">
    <property type="entry name" value="Autophagy protein 5"/>
    <property type="match status" value="1"/>
</dbReference>
<dbReference type="FunFam" id="3.10.20.90:FF:000290">
    <property type="entry name" value="Autophagy protein 5"/>
    <property type="match status" value="1"/>
</dbReference>
<dbReference type="Gene3D" id="3.10.20.620">
    <property type="match status" value="1"/>
</dbReference>
<dbReference type="Gene3D" id="1.10.246.190">
    <property type="entry name" value="Autophagy protein Apg5, helix rich domain"/>
    <property type="match status" value="1"/>
</dbReference>
<dbReference type="Gene3D" id="3.10.20.90">
    <property type="entry name" value="Phosphatidylinositol 3-kinase Catalytic Subunit, Chain A, domain 1"/>
    <property type="match status" value="1"/>
</dbReference>
<dbReference type="InterPro" id="IPR007239">
    <property type="entry name" value="Atg5"/>
</dbReference>
<dbReference type="InterPro" id="IPR048940">
    <property type="entry name" value="ATG5_HBR"/>
</dbReference>
<dbReference type="InterPro" id="IPR042526">
    <property type="entry name" value="Atg5_HR"/>
</dbReference>
<dbReference type="InterPro" id="IPR048939">
    <property type="entry name" value="ATG5_UblA"/>
</dbReference>
<dbReference type="InterPro" id="IPR042527">
    <property type="entry name" value="Atg5_UblA_dom_sf"/>
</dbReference>
<dbReference type="InterPro" id="IPR048318">
    <property type="entry name" value="ATG5_UblB"/>
</dbReference>
<dbReference type="PANTHER" id="PTHR13040">
    <property type="entry name" value="AUTOPHAGY PROTEIN 5"/>
    <property type="match status" value="1"/>
</dbReference>
<dbReference type="PANTHER" id="PTHR13040:SF2">
    <property type="entry name" value="AUTOPHAGY PROTEIN 5"/>
    <property type="match status" value="1"/>
</dbReference>
<dbReference type="Pfam" id="PF20637">
    <property type="entry name" value="ATG5_HBR"/>
    <property type="match status" value="1"/>
</dbReference>
<dbReference type="Pfam" id="PF20638">
    <property type="entry name" value="ATG5_UblA"/>
    <property type="match status" value="1"/>
</dbReference>
<dbReference type="Pfam" id="PF04106">
    <property type="entry name" value="ATG5_UblB"/>
    <property type="match status" value="1"/>
</dbReference>
<accession>Q2UBM1</accession>
<gene>
    <name type="primary">atg5</name>
    <name type="ORF">AO090012000943</name>
</gene>
<feature type="chain" id="PRO_0000317851" description="Autophagy protein 5">
    <location>
        <begin position="1"/>
        <end position="322"/>
    </location>
</feature>
<feature type="cross-link" description="Glycyl lysine isopeptide (Lys-Gly) (interchain with G-Cter in atg12)" evidence="1">
    <location>
        <position position="158"/>
    </location>
</feature>
<name>ATG5_ASPOR</name>
<reference key="1">
    <citation type="journal article" date="2005" name="Nature">
        <title>Genome sequencing and analysis of Aspergillus oryzae.</title>
        <authorList>
            <person name="Machida M."/>
            <person name="Asai K."/>
            <person name="Sano M."/>
            <person name="Tanaka T."/>
            <person name="Kumagai T."/>
            <person name="Terai G."/>
            <person name="Kusumoto K."/>
            <person name="Arima T."/>
            <person name="Akita O."/>
            <person name="Kashiwagi Y."/>
            <person name="Abe K."/>
            <person name="Gomi K."/>
            <person name="Horiuchi H."/>
            <person name="Kitamoto K."/>
            <person name="Kobayashi T."/>
            <person name="Takeuchi M."/>
            <person name="Denning D.W."/>
            <person name="Galagan J.E."/>
            <person name="Nierman W.C."/>
            <person name="Yu J."/>
            <person name="Archer D.B."/>
            <person name="Bennett J.W."/>
            <person name="Bhatnagar D."/>
            <person name="Cleveland T.E."/>
            <person name="Fedorova N.D."/>
            <person name="Gotoh O."/>
            <person name="Horikawa H."/>
            <person name="Hosoyama A."/>
            <person name="Ichinomiya M."/>
            <person name="Igarashi R."/>
            <person name="Iwashita K."/>
            <person name="Juvvadi P.R."/>
            <person name="Kato M."/>
            <person name="Kato Y."/>
            <person name="Kin T."/>
            <person name="Kokubun A."/>
            <person name="Maeda H."/>
            <person name="Maeyama N."/>
            <person name="Maruyama J."/>
            <person name="Nagasaki H."/>
            <person name="Nakajima T."/>
            <person name="Oda K."/>
            <person name="Okada K."/>
            <person name="Paulsen I."/>
            <person name="Sakamoto K."/>
            <person name="Sawano T."/>
            <person name="Takahashi M."/>
            <person name="Takase K."/>
            <person name="Terabayashi Y."/>
            <person name="Wortman J.R."/>
            <person name="Yamada O."/>
            <person name="Yamagata Y."/>
            <person name="Anazawa H."/>
            <person name="Hata Y."/>
            <person name="Koide Y."/>
            <person name="Komori T."/>
            <person name="Koyama Y."/>
            <person name="Minetoki T."/>
            <person name="Suharnan S."/>
            <person name="Tanaka A."/>
            <person name="Isono K."/>
            <person name="Kuhara S."/>
            <person name="Ogasawara N."/>
            <person name="Kikuchi H."/>
        </authorList>
    </citation>
    <scope>NUCLEOTIDE SEQUENCE [LARGE SCALE GENOMIC DNA]</scope>
    <source>
        <strain>ATCC 42149 / RIB 40</strain>
    </source>
</reference>
<evidence type="ECO:0000250" key="1"/>
<evidence type="ECO:0000305" key="2"/>
<sequence length="322" mass="35478">METQATLNSIQKAVWDGRLPLQIRLAPSESRIYDQTDPYLISYPRISYLPSLLPRLRAFFASSLIDPSSNAHDGWFSFEGVPLKWHLPIGLLYDLYAGADPASKGTAESEDAGWDIDDQDNPLPWRLVVHFSDWPDEELVRLDAEGMVMNDAFINSVKEADFLRNGTAKGIMSLSKEDSSGLWKSVQNVELSSFQRISNILLPPLNQPFRNIPIRIFLPLPPDSGSPSLKIVQSPVPPLIPPSSVAASQLALSRSSITPQTQTIGSALHSLLPNLFPSRRTPVLAKPVLHGAAVPMSAPVEELVRSSAYGDGWLYVVIRMMG</sequence>